<accession>B3EJ63</accession>
<keyword id="KW-0028">Amino-acid biosynthesis</keyword>
<keyword id="KW-0055">Arginine biosynthesis</keyword>
<keyword id="KW-0963">Cytoplasm</keyword>
<keyword id="KW-0238">DNA-binding</keyword>
<keyword id="KW-0678">Repressor</keyword>
<keyword id="KW-0804">Transcription</keyword>
<keyword id="KW-0805">Transcription regulation</keyword>
<reference key="1">
    <citation type="submission" date="2008-06" db="EMBL/GenBank/DDBJ databases">
        <title>Complete sequence of Chlorobium phaeobacteroides BS1.</title>
        <authorList>
            <consortium name="US DOE Joint Genome Institute"/>
            <person name="Lucas S."/>
            <person name="Copeland A."/>
            <person name="Lapidus A."/>
            <person name="Glavina del Rio T."/>
            <person name="Dalin E."/>
            <person name="Tice H."/>
            <person name="Bruce D."/>
            <person name="Goodwin L."/>
            <person name="Pitluck S."/>
            <person name="Schmutz J."/>
            <person name="Larimer F."/>
            <person name="Land M."/>
            <person name="Hauser L."/>
            <person name="Kyrpides N."/>
            <person name="Ovchinnikova G."/>
            <person name="Li T."/>
            <person name="Liu Z."/>
            <person name="Zhao F."/>
            <person name="Overmann J."/>
            <person name="Bryant D.A."/>
            <person name="Richardson P."/>
        </authorList>
    </citation>
    <scope>NUCLEOTIDE SEQUENCE [LARGE SCALE GENOMIC DNA]</scope>
    <source>
        <strain>BS1</strain>
    </source>
</reference>
<sequence length="148" mass="16326">MSKQIRHRKIKEILLSSTVTNQHELILLLEKRGIDVAQATLSRDCSELGVLRSRTASGYRLMIPEDNPGQMIKGLVEMEIQSIESNESSIVIKTLPGRAHGVGSFIDHLKNPGILGTIAGDDTVLVIPSSVHDIRSILDYMQTNLLNN</sequence>
<proteinExistence type="inferred from homology"/>
<evidence type="ECO:0000255" key="1">
    <source>
        <dbReference type="HAMAP-Rule" id="MF_00173"/>
    </source>
</evidence>
<name>ARGR_CHLPB</name>
<organism>
    <name type="scientific">Chlorobium phaeobacteroides (strain BS1)</name>
    <dbReference type="NCBI Taxonomy" id="331678"/>
    <lineage>
        <taxon>Bacteria</taxon>
        <taxon>Pseudomonadati</taxon>
        <taxon>Chlorobiota</taxon>
        <taxon>Chlorobiia</taxon>
        <taxon>Chlorobiales</taxon>
        <taxon>Chlorobiaceae</taxon>
        <taxon>Chlorobium/Pelodictyon group</taxon>
        <taxon>Chlorobium</taxon>
    </lineage>
</organism>
<feature type="chain" id="PRO_1000097861" description="Arginine repressor">
    <location>
        <begin position="1"/>
        <end position="148"/>
    </location>
</feature>
<gene>
    <name evidence="1" type="primary">argR</name>
    <name type="ordered locus">Cphamn1_1333</name>
</gene>
<dbReference type="EMBL" id="CP001101">
    <property type="protein sequence ID" value="ACE04263.1"/>
    <property type="molecule type" value="Genomic_DNA"/>
</dbReference>
<dbReference type="SMR" id="B3EJ63"/>
<dbReference type="STRING" id="331678.Cphamn1_1333"/>
<dbReference type="KEGG" id="cpb:Cphamn1_1333"/>
<dbReference type="eggNOG" id="COG1438">
    <property type="taxonomic scope" value="Bacteria"/>
</dbReference>
<dbReference type="HOGENOM" id="CLU_097103_3_0_10"/>
<dbReference type="OrthoDB" id="9807089at2"/>
<dbReference type="UniPathway" id="UPA00068"/>
<dbReference type="GO" id="GO:0005737">
    <property type="term" value="C:cytoplasm"/>
    <property type="evidence" value="ECO:0007669"/>
    <property type="project" value="UniProtKB-SubCell"/>
</dbReference>
<dbReference type="GO" id="GO:0034618">
    <property type="term" value="F:arginine binding"/>
    <property type="evidence" value="ECO:0007669"/>
    <property type="project" value="InterPro"/>
</dbReference>
<dbReference type="GO" id="GO:0003677">
    <property type="term" value="F:DNA binding"/>
    <property type="evidence" value="ECO:0007669"/>
    <property type="project" value="UniProtKB-KW"/>
</dbReference>
<dbReference type="GO" id="GO:0003700">
    <property type="term" value="F:DNA-binding transcription factor activity"/>
    <property type="evidence" value="ECO:0007669"/>
    <property type="project" value="UniProtKB-UniRule"/>
</dbReference>
<dbReference type="GO" id="GO:0006526">
    <property type="term" value="P:L-arginine biosynthetic process"/>
    <property type="evidence" value="ECO:0007669"/>
    <property type="project" value="UniProtKB-UniPathway"/>
</dbReference>
<dbReference type="GO" id="GO:0051259">
    <property type="term" value="P:protein complex oligomerization"/>
    <property type="evidence" value="ECO:0007669"/>
    <property type="project" value="InterPro"/>
</dbReference>
<dbReference type="GO" id="GO:1900079">
    <property type="term" value="P:regulation of arginine biosynthetic process"/>
    <property type="evidence" value="ECO:0007669"/>
    <property type="project" value="UniProtKB-UniRule"/>
</dbReference>
<dbReference type="Gene3D" id="3.30.1360.40">
    <property type="match status" value="1"/>
</dbReference>
<dbReference type="Gene3D" id="1.10.10.10">
    <property type="entry name" value="Winged helix-like DNA-binding domain superfamily/Winged helix DNA-binding domain"/>
    <property type="match status" value="1"/>
</dbReference>
<dbReference type="HAMAP" id="MF_00173">
    <property type="entry name" value="Arg_repressor"/>
    <property type="match status" value="1"/>
</dbReference>
<dbReference type="InterPro" id="IPR001669">
    <property type="entry name" value="Arg_repress"/>
</dbReference>
<dbReference type="InterPro" id="IPR020899">
    <property type="entry name" value="Arg_repress_C"/>
</dbReference>
<dbReference type="InterPro" id="IPR036251">
    <property type="entry name" value="Arg_repress_C_sf"/>
</dbReference>
<dbReference type="InterPro" id="IPR020900">
    <property type="entry name" value="Arg_repress_DNA-bd"/>
</dbReference>
<dbReference type="InterPro" id="IPR036388">
    <property type="entry name" value="WH-like_DNA-bd_sf"/>
</dbReference>
<dbReference type="InterPro" id="IPR036390">
    <property type="entry name" value="WH_DNA-bd_sf"/>
</dbReference>
<dbReference type="PANTHER" id="PTHR34471">
    <property type="entry name" value="ARGININE REPRESSOR"/>
    <property type="match status" value="1"/>
</dbReference>
<dbReference type="PANTHER" id="PTHR34471:SF1">
    <property type="entry name" value="ARGININE REPRESSOR"/>
    <property type="match status" value="1"/>
</dbReference>
<dbReference type="Pfam" id="PF01316">
    <property type="entry name" value="Arg_repressor"/>
    <property type="match status" value="1"/>
</dbReference>
<dbReference type="Pfam" id="PF02863">
    <property type="entry name" value="Arg_repressor_C"/>
    <property type="match status" value="1"/>
</dbReference>
<dbReference type="PRINTS" id="PR01467">
    <property type="entry name" value="ARGREPRESSOR"/>
</dbReference>
<dbReference type="SUPFAM" id="SSF55252">
    <property type="entry name" value="C-terminal domain of arginine repressor"/>
    <property type="match status" value="1"/>
</dbReference>
<dbReference type="SUPFAM" id="SSF46785">
    <property type="entry name" value="Winged helix' DNA-binding domain"/>
    <property type="match status" value="1"/>
</dbReference>
<protein>
    <recommendedName>
        <fullName evidence="1">Arginine repressor</fullName>
    </recommendedName>
</protein>
<comment type="function">
    <text evidence="1">Regulates arginine biosynthesis genes.</text>
</comment>
<comment type="pathway">
    <text>Amino-acid biosynthesis; L-arginine biosynthesis [regulation].</text>
</comment>
<comment type="subcellular location">
    <subcellularLocation>
        <location evidence="1">Cytoplasm</location>
    </subcellularLocation>
</comment>
<comment type="similarity">
    <text evidence="1">Belongs to the ArgR family.</text>
</comment>